<sequence>MDWMWLLSGACIVFTLGMFSSGLSDLRVMVAQRSVENIQYLPFLTTDLNNLGWFYYGYLKGDGTLMIVNVIGASLQSLYMGAYLLYSPERRYVGSQVLVSLGVLLLGYCYFTLWILDLNSRLNQLGLFCSVFTISMYLSPLADLAQIIRSKSTKCLSFPLTVATFLTSSSWVLYGLVQSDLYITVPNFPGIVTSLVRFWLFSQFPPDPPTYRLLQA</sequence>
<feature type="chain" id="PRO_0000345120" description="Sugar transporter SWEET1">
    <location>
        <begin position="1"/>
        <end position="216"/>
    </location>
</feature>
<feature type="transmembrane region" description="Helical; Name=1" evidence="2">
    <location>
        <begin position="3"/>
        <end position="23"/>
    </location>
</feature>
<feature type="transmembrane region" description="Helical; Name=2" evidence="2">
    <location>
        <begin position="36"/>
        <end position="56"/>
    </location>
</feature>
<feature type="transmembrane region" description="Helical; Name=3" evidence="2">
    <location>
        <begin position="65"/>
        <end position="85"/>
    </location>
</feature>
<feature type="transmembrane region" description="Helical; Name=4" evidence="2">
    <location>
        <begin position="96"/>
        <end position="116"/>
    </location>
</feature>
<feature type="transmembrane region" description="Helical; Name=5" evidence="2">
    <location>
        <begin position="125"/>
        <end position="145"/>
    </location>
</feature>
<feature type="transmembrane region" description="Helical; Name=6" evidence="2">
    <location>
        <begin position="157"/>
        <end position="177"/>
    </location>
</feature>
<feature type="transmembrane region" description="Helical; Name=7" evidence="2">
    <location>
        <begin position="181"/>
        <end position="201"/>
    </location>
</feature>
<feature type="domain" description="MtN3/slv 1">
    <location>
        <begin position="6"/>
        <end position="90"/>
    </location>
</feature>
<feature type="domain" description="MtN3/slv 2">
    <location>
        <begin position="124"/>
        <end position="206"/>
    </location>
</feature>
<name>SWET1_XENLA</name>
<reference key="1">
    <citation type="submission" date="2004-04" db="EMBL/GenBank/DDBJ databases">
        <authorList>
            <consortium name="NIH - Xenopus Gene Collection (XGC) project"/>
        </authorList>
    </citation>
    <scope>NUCLEOTIDE SEQUENCE [LARGE SCALE MRNA]</scope>
    <source>
        <tissue>Embryo</tissue>
    </source>
</reference>
<proteinExistence type="evidence at transcript level"/>
<accession>Q6NTJ7</accession>
<gene>
    <name type="primary">slc50a1</name>
</gene>
<keyword id="KW-1003">Cell membrane</keyword>
<keyword id="KW-0333">Golgi apparatus</keyword>
<keyword id="KW-0472">Membrane</keyword>
<keyword id="KW-1185">Reference proteome</keyword>
<keyword id="KW-0677">Repeat</keyword>
<keyword id="KW-0762">Sugar transport</keyword>
<keyword id="KW-0812">Transmembrane</keyword>
<keyword id="KW-1133">Transmembrane helix</keyword>
<keyword id="KW-0813">Transport</keyword>
<organism>
    <name type="scientific">Xenopus laevis</name>
    <name type="common">African clawed frog</name>
    <dbReference type="NCBI Taxonomy" id="8355"/>
    <lineage>
        <taxon>Eukaryota</taxon>
        <taxon>Metazoa</taxon>
        <taxon>Chordata</taxon>
        <taxon>Craniata</taxon>
        <taxon>Vertebrata</taxon>
        <taxon>Euteleostomi</taxon>
        <taxon>Amphibia</taxon>
        <taxon>Batrachia</taxon>
        <taxon>Anura</taxon>
        <taxon>Pipoidea</taxon>
        <taxon>Pipidae</taxon>
        <taxon>Xenopodinae</taxon>
        <taxon>Xenopus</taxon>
        <taxon>Xenopus</taxon>
    </lineage>
</organism>
<protein>
    <recommendedName>
        <fullName>Sugar transporter SWEET1</fullName>
    </recommendedName>
    <alternativeName>
        <fullName>Solute carrier family 50 member 1</fullName>
    </alternativeName>
</protein>
<comment type="function">
    <text evidence="1">Mediates sugar transport across membranes.</text>
</comment>
<comment type="subcellular location">
    <subcellularLocation>
        <location evidence="1">Golgi apparatus membrane</location>
        <topology evidence="1">Multi-pass membrane protein</topology>
    </subcellularLocation>
    <subcellularLocation>
        <location evidence="1">Cell membrane</location>
        <topology evidence="1">Multi-pass membrane protein</topology>
    </subcellularLocation>
</comment>
<comment type="similarity">
    <text evidence="3">Belongs to the SWEET sugar transporter family.</text>
</comment>
<evidence type="ECO:0000250" key="1"/>
<evidence type="ECO:0000255" key="2"/>
<evidence type="ECO:0000305" key="3"/>
<dbReference type="EMBL" id="BC068964">
    <property type="protein sequence ID" value="AAH68964.1"/>
    <property type="molecule type" value="mRNA"/>
</dbReference>
<dbReference type="RefSeq" id="NP_001084504.1">
    <property type="nucleotide sequence ID" value="NM_001091035.1"/>
</dbReference>
<dbReference type="SMR" id="Q6NTJ7"/>
<dbReference type="DNASU" id="414448"/>
<dbReference type="GeneID" id="414448"/>
<dbReference type="KEGG" id="xla:414448"/>
<dbReference type="AGR" id="Xenbase:XB-GENE-6252851"/>
<dbReference type="CTD" id="414448"/>
<dbReference type="Xenbase" id="XB-GENE-6252851">
    <property type="gene designation" value="slc50a1.L"/>
</dbReference>
<dbReference type="OrthoDB" id="409725at2759"/>
<dbReference type="Proteomes" id="UP000186698">
    <property type="component" value="Chromosome 8L"/>
</dbReference>
<dbReference type="Bgee" id="414448">
    <property type="expression patterns" value="Expressed in liver and 19 other cell types or tissues"/>
</dbReference>
<dbReference type="GO" id="GO:0000139">
    <property type="term" value="C:Golgi membrane"/>
    <property type="evidence" value="ECO:0007669"/>
    <property type="project" value="UniProtKB-SubCell"/>
</dbReference>
<dbReference type="GO" id="GO:0016020">
    <property type="term" value="C:membrane"/>
    <property type="evidence" value="ECO:0000318"/>
    <property type="project" value="GO_Central"/>
</dbReference>
<dbReference type="GO" id="GO:0005886">
    <property type="term" value="C:plasma membrane"/>
    <property type="evidence" value="ECO:0007669"/>
    <property type="project" value="UniProtKB-SubCell"/>
</dbReference>
<dbReference type="GO" id="GO:0051119">
    <property type="term" value="F:sugar transmembrane transporter activity"/>
    <property type="evidence" value="ECO:0000250"/>
    <property type="project" value="UniProtKB"/>
</dbReference>
<dbReference type="GO" id="GO:0008643">
    <property type="term" value="P:carbohydrate transport"/>
    <property type="evidence" value="ECO:0000318"/>
    <property type="project" value="GO_Central"/>
</dbReference>
<dbReference type="FunFam" id="1.20.1280.290:FF:000004">
    <property type="entry name" value="Sugar transporter SWEET"/>
    <property type="match status" value="1"/>
</dbReference>
<dbReference type="FunFam" id="1.20.1280.290:FF:000010">
    <property type="entry name" value="Sugar transporter SWEET"/>
    <property type="match status" value="1"/>
</dbReference>
<dbReference type="Gene3D" id="1.20.1280.290">
    <property type="match status" value="2"/>
</dbReference>
<dbReference type="InterPro" id="IPR047664">
    <property type="entry name" value="SWEET"/>
</dbReference>
<dbReference type="InterPro" id="IPR004316">
    <property type="entry name" value="SWEET_rpt"/>
</dbReference>
<dbReference type="PANTHER" id="PTHR10791">
    <property type="entry name" value="RAG1-ACTIVATING PROTEIN 1"/>
    <property type="match status" value="1"/>
</dbReference>
<dbReference type="PANTHER" id="PTHR10791:SF30">
    <property type="entry name" value="SUGAR TRANSPORTER SWEET1"/>
    <property type="match status" value="1"/>
</dbReference>
<dbReference type="Pfam" id="PF03083">
    <property type="entry name" value="MtN3_slv"/>
    <property type="match status" value="2"/>
</dbReference>